<accession>O31636</accession>
<sequence length="106" mass="11947">MKKKTKIILSLLAALIVILIVLPVLSPVVFTASSEKGAIRHEIYKRGYPYQSYFAVLQKREGDNESGNLYYVNWLDWKDETGQTPHLCYSKKSSDGEYEVSCGTGP</sequence>
<reference key="1">
    <citation type="journal article" date="1997" name="Nature">
        <title>The complete genome sequence of the Gram-positive bacterium Bacillus subtilis.</title>
        <authorList>
            <person name="Kunst F."/>
            <person name="Ogasawara N."/>
            <person name="Moszer I."/>
            <person name="Albertini A.M."/>
            <person name="Alloni G."/>
            <person name="Azevedo V."/>
            <person name="Bertero M.G."/>
            <person name="Bessieres P."/>
            <person name="Bolotin A."/>
            <person name="Borchert S."/>
            <person name="Borriss R."/>
            <person name="Boursier L."/>
            <person name="Brans A."/>
            <person name="Braun M."/>
            <person name="Brignell S.C."/>
            <person name="Bron S."/>
            <person name="Brouillet S."/>
            <person name="Bruschi C.V."/>
            <person name="Caldwell B."/>
            <person name="Capuano V."/>
            <person name="Carter N.M."/>
            <person name="Choi S.-K."/>
            <person name="Codani J.-J."/>
            <person name="Connerton I.F."/>
            <person name="Cummings N.J."/>
            <person name="Daniel R.A."/>
            <person name="Denizot F."/>
            <person name="Devine K.M."/>
            <person name="Duesterhoeft A."/>
            <person name="Ehrlich S.D."/>
            <person name="Emmerson P.T."/>
            <person name="Entian K.-D."/>
            <person name="Errington J."/>
            <person name="Fabret C."/>
            <person name="Ferrari E."/>
            <person name="Foulger D."/>
            <person name="Fritz C."/>
            <person name="Fujita M."/>
            <person name="Fujita Y."/>
            <person name="Fuma S."/>
            <person name="Galizzi A."/>
            <person name="Galleron N."/>
            <person name="Ghim S.-Y."/>
            <person name="Glaser P."/>
            <person name="Goffeau A."/>
            <person name="Golightly E.J."/>
            <person name="Grandi G."/>
            <person name="Guiseppi G."/>
            <person name="Guy B.J."/>
            <person name="Haga K."/>
            <person name="Haiech J."/>
            <person name="Harwood C.R."/>
            <person name="Henaut A."/>
            <person name="Hilbert H."/>
            <person name="Holsappel S."/>
            <person name="Hosono S."/>
            <person name="Hullo M.-F."/>
            <person name="Itaya M."/>
            <person name="Jones L.-M."/>
            <person name="Joris B."/>
            <person name="Karamata D."/>
            <person name="Kasahara Y."/>
            <person name="Klaerr-Blanchard M."/>
            <person name="Klein C."/>
            <person name="Kobayashi Y."/>
            <person name="Koetter P."/>
            <person name="Koningstein G."/>
            <person name="Krogh S."/>
            <person name="Kumano M."/>
            <person name="Kurita K."/>
            <person name="Lapidus A."/>
            <person name="Lardinois S."/>
            <person name="Lauber J."/>
            <person name="Lazarevic V."/>
            <person name="Lee S.-M."/>
            <person name="Levine A."/>
            <person name="Liu H."/>
            <person name="Masuda S."/>
            <person name="Mauel C."/>
            <person name="Medigue C."/>
            <person name="Medina N."/>
            <person name="Mellado R.P."/>
            <person name="Mizuno M."/>
            <person name="Moestl D."/>
            <person name="Nakai S."/>
            <person name="Noback M."/>
            <person name="Noone D."/>
            <person name="O'Reilly M."/>
            <person name="Ogawa K."/>
            <person name="Ogiwara A."/>
            <person name="Oudega B."/>
            <person name="Park S.-H."/>
            <person name="Parro V."/>
            <person name="Pohl T.M."/>
            <person name="Portetelle D."/>
            <person name="Porwollik S."/>
            <person name="Prescott A.M."/>
            <person name="Presecan E."/>
            <person name="Pujic P."/>
            <person name="Purnelle B."/>
            <person name="Rapoport G."/>
            <person name="Rey M."/>
            <person name="Reynolds S."/>
            <person name="Rieger M."/>
            <person name="Rivolta C."/>
            <person name="Rocha E."/>
            <person name="Roche B."/>
            <person name="Rose M."/>
            <person name="Sadaie Y."/>
            <person name="Sato T."/>
            <person name="Scanlan E."/>
            <person name="Schleich S."/>
            <person name="Schroeter R."/>
            <person name="Scoffone F."/>
            <person name="Sekiguchi J."/>
            <person name="Sekowska A."/>
            <person name="Seror S.J."/>
            <person name="Serror P."/>
            <person name="Shin B.-S."/>
            <person name="Soldo B."/>
            <person name="Sorokin A."/>
            <person name="Tacconi E."/>
            <person name="Takagi T."/>
            <person name="Takahashi H."/>
            <person name="Takemaru K."/>
            <person name="Takeuchi M."/>
            <person name="Tamakoshi A."/>
            <person name="Tanaka T."/>
            <person name="Terpstra P."/>
            <person name="Tognoni A."/>
            <person name="Tosato V."/>
            <person name="Uchiyama S."/>
            <person name="Vandenbol M."/>
            <person name="Vannier F."/>
            <person name="Vassarotti A."/>
            <person name="Viari A."/>
            <person name="Wambutt R."/>
            <person name="Wedler E."/>
            <person name="Wedler H."/>
            <person name="Weitzenegger T."/>
            <person name="Winters P."/>
            <person name="Wipat A."/>
            <person name="Yamamoto H."/>
            <person name="Yamane K."/>
            <person name="Yasumoto K."/>
            <person name="Yata K."/>
            <person name="Yoshida K."/>
            <person name="Yoshikawa H.-F."/>
            <person name="Zumstein E."/>
            <person name="Yoshikawa H."/>
            <person name="Danchin A."/>
        </authorList>
    </citation>
    <scope>NUCLEOTIDE SEQUENCE [LARGE SCALE GENOMIC DNA]</scope>
    <source>
        <strain>168</strain>
    </source>
</reference>
<organism>
    <name type="scientific">Bacillus subtilis (strain 168)</name>
    <dbReference type="NCBI Taxonomy" id="224308"/>
    <lineage>
        <taxon>Bacteria</taxon>
        <taxon>Bacillati</taxon>
        <taxon>Bacillota</taxon>
        <taxon>Bacilli</taxon>
        <taxon>Bacillales</taxon>
        <taxon>Bacillaceae</taxon>
        <taxon>Bacillus</taxon>
    </lineage>
</organism>
<keyword id="KW-1185">Reference proteome</keyword>
<keyword id="KW-0732">Signal</keyword>
<name>YJCN_BACSU</name>
<evidence type="ECO:0000255" key="1"/>
<protein>
    <recommendedName>
        <fullName>Uncharacterized protein YjcN</fullName>
    </recommendedName>
</protein>
<proteinExistence type="inferred from homology"/>
<feature type="signal peptide" evidence="1">
    <location>
        <begin position="1"/>
        <end position="31"/>
    </location>
</feature>
<feature type="chain" id="PRO_0000013704" description="Uncharacterized protein YjcN">
    <location>
        <begin position="32"/>
        <end position="106"/>
    </location>
</feature>
<dbReference type="EMBL" id="AL009126">
    <property type="protein sequence ID" value="CAB13049.1"/>
    <property type="molecule type" value="Genomic_DNA"/>
</dbReference>
<dbReference type="PIR" id="F69847">
    <property type="entry name" value="F69847"/>
</dbReference>
<dbReference type="RefSeq" id="NP_389074.1">
    <property type="nucleotide sequence ID" value="NC_000964.3"/>
</dbReference>
<dbReference type="RefSeq" id="WP_009967025.1">
    <property type="nucleotide sequence ID" value="NZ_OZ025638.1"/>
</dbReference>
<dbReference type="FunCoup" id="O31636">
    <property type="interactions" value="120"/>
</dbReference>
<dbReference type="STRING" id="224308.BSU11920"/>
<dbReference type="jPOST" id="O31636"/>
<dbReference type="PaxDb" id="224308-BSU11920"/>
<dbReference type="DNASU" id="939817"/>
<dbReference type="EnsemblBacteria" id="CAB13049">
    <property type="protein sequence ID" value="CAB13049"/>
    <property type="gene ID" value="BSU_11920"/>
</dbReference>
<dbReference type="GeneID" id="939817"/>
<dbReference type="KEGG" id="bsu:BSU11920"/>
<dbReference type="PATRIC" id="fig|224308.179.peg.1285"/>
<dbReference type="eggNOG" id="ENOG503476F">
    <property type="taxonomic scope" value="Bacteria"/>
</dbReference>
<dbReference type="InParanoid" id="O31636"/>
<dbReference type="OrthoDB" id="2930627at2"/>
<dbReference type="BioCyc" id="BSUB:BSU11920-MONOMER"/>
<dbReference type="Proteomes" id="UP000001570">
    <property type="component" value="Chromosome"/>
</dbReference>
<gene>
    <name type="primary">yjcN</name>
    <name type="ordered locus">BSU11920</name>
</gene>